<accession>A5IGR7</accession>
<protein>
    <recommendedName>
        <fullName evidence="1">ATP-dependent protease subunit HslV</fullName>
        <ecNumber evidence="1">3.4.25.2</ecNumber>
    </recommendedName>
</protein>
<comment type="function">
    <text evidence="1">Protease subunit of a proteasome-like degradation complex believed to be a general protein degrading machinery.</text>
</comment>
<comment type="catalytic activity">
    <reaction evidence="1">
        <text>ATP-dependent cleavage of peptide bonds with broad specificity.</text>
        <dbReference type="EC" id="3.4.25.2"/>
    </reaction>
</comment>
<comment type="activity regulation">
    <text evidence="1">Allosterically activated by HslU binding.</text>
</comment>
<comment type="subunit">
    <text evidence="1">A double ring-shaped homohexamer of HslV is capped on each side by a ring-shaped HslU homohexamer. The assembly of the HslU/HslV complex is dependent on binding of ATP.</text>
</comment>
<comment type="subcellular location">
    <subcellularLocation>
        <location evidence="1">Cytoplasm</location>
    </subcellularLocation>
</comment>
<comment type="similarity">
    <text evidence="1">Belongs to the peptidase T1B family. HslV subfamily.</text>
</comment>
<sequence>MEQFHGTTILSVRRGNQVVIGGDGQVTLGNTVMKGNARKVRRLYKDKVIAGFAGGTADAFTLFERFEAKLEMHQGHLIRAAVELAKDWRTDRILRRLEAVLAVADSKASLIITGNGDVIEPEESLIAIGSGGPFAQAAARALMENTQLSAKEIVQKALTIAGDICIYTNNNLTIEELNDEGK</sequence>
<feature type="chain" id="PRO_1000012628" description="ATP-dependent protease subunit HslV">
    <location>
        <begin position="1"/>
        <end position="182"/>
    </location>
</feature>
<feature type="active site" evidence="1">
    <location>
        <position position="7"/>
    </location>
</feature>
<feature type="binding site" evidence="1">
    <location>
        <position position="162"/>
    </location>
    <ligand>
        <name>Na(+)</name>
        <dbReference type="ChEBI" id="CHEBI:29101"/>
    </ligand>
</feature>
<feature type="binding site" evidence="1">
    <location>
        <position position="165"/>
    </location>
    <ligand>
        <name>Na(+)</name>
        <dbReference type="ChEBI" id="CHEBI:29101"/>
    </ligand>
</feature>
<feature type="binding site" evidence="1">
    <location>
        <position position="168"/>
    </location>
    <ligand>
        <name>Na(+)</name>
        <dbReference type="ChEBI" id="CHEBI:29101"/>
    </ligand>
</feature>
<reference key="1">
    <citation type="submission" date="2006-11" db="EMBL/GenBank/DDBJ databases">
        <title>Identification and characterization of a new conjugation/ type IVA secretion system (trb/tra) of L. pneumophila Corby localized on a mobile genomic island.</title>
        <authorList>
            <person name="Gloeckner G."/>
            <person name="Albert-Weissenberger C."/>
            <person name="Weinmann E."/>
            <person name="Jacobi S."/>
            <person name="Schunder E."/>
            <person name="Steinert M."/>
            <person name="Buchrieser C."/>
            <person name="Hacker J."/>
            <person name="Heuner K."/>
        </authorList>
    </citation>
    <scope>NUCLEOTIDE SEQUENCE [LARGE SCALE GENOMIC DNA]</scope>
    <source>
        <strain>Corby</strain>
    </source>
</reference>
<keyword id="KW-0021">Allosteric enzyme</keyword>
<keyword id="KW-0963">Cytoplasm</keyword>
<keyword id="KW-0378">Hydrolase</keyword>
<keyword id="KW-0479">Metal-binding</keyword>
<keyword id="KW-0645">Protease</keyword>
<keyword id="KW-0915">Sodium</keyword>
<keyword id="KW-0346">Stress response</keyword>
<keyword id="KW-0888">Threonine protease</keyword>
<gene>
    <name evidence="1" type="primary">hslV</name>
    <name type="ordered locus">LPC_2653</name>
</gene>
<evidence type="ECO:0000255" key="1">
    <source>
        <dbReference type="HAMAP-Rule" id="MF_00248"/>
    </source>
</evidence>
<proteinExistence type="inferred from homology"/>
<name>HSLV_LEGPC</name>
<dbReference type="EC" id="3.4.25.2" evidence="1"/>
<dbReference type="EMBL" id="CP000675">
    <property type="protein sequence ID" value="ABQ56567.1"/>
    <property type="molecule type" value="Genomic_DNA"/>
</dbReference>
<dbReference type="RefSeq" id="WP_010946377.1">
    <property type="nucleotide sequence ID" value="NZ_JAPMSS010000013.1"/>
</dbReference>
<dbReference type="SMR" id="A5IGR7"/>
<dbReference type="MEROPS" id="T01.006"/>
<dbReference type="GeneID" id="57034635"/>
<dbReference type="KEGG" id="lpc:LPC_2653"/>
<dbReference type="HOGENOM" id="CLU_093872_1_0_6"/>
<dbReference type="GO" id="GO:0009376">
    <property type="term" value="C:HslUV protease complex"/>
    <property type="evidence" value="ECO:0007669"/>
    <property type="project" value="UniProtKB-UniRule"/>
</dbReference>
<dbReference type="GO" id="GO:0005839">
    <property type="term" value="C:proteasome core complex"/>
    <property type="evidence" value="ECO:0007669"/>
    <property type="project" value="InterPro"/>
</dbReference>
<dbReference type="GO" id="GO:0046872">
    <property type="term" value="F:metal ion binding"/>
    <property type="evidence" value="ECO:0007669"/>
    <property type="project" value="UniProtKB-KW"/>
</dbReference>
<dbReference type="GO" id="GO:0004298">
    <property type="term" value="F:threonine-type endopeptidase activity"/>
    <property type="evidence" value="ECO:0007669"/>
    <property type="project" value="UniProtKB-KW"/>
</dbReference>
<dbReference type="GO" id="GO:0051603">
    <property type="term" value="P:proteolysis involved in protein catabolic process"/>
    <property type="evidence" value="ECO:0007669"/>
    <property type="project" value="InterPro"/>
</dbReference>
<dbReference type="CDD" id="cd01913">
    <property type="entry name" value="protease_HslV"/>
    <property type="match status" value="1"/>
</dbReference>
<dbReference type="FunFam" id="3.60.20.10:FF:000002">
    <property type="entry name" value="ATP-dependent protease subunit HslV"/>
    <property type="match status" value="1"/>
</dbReference>
<dbReference type="Gene3D" id="3.60.20.10">
    <property type="entry name" value="Glutamine Phosphoribosylpyrophosphate, subunit 1, domain 1"/>
    <property type="match status" value="1"/>
</dbReference>
<dbReference type="HAMAP" id="MF_00248">
    <property type="entry name" value="HslV"/>
    <property type="match status" value="1"/>
</dbReference>
<dbReference type="InterPro" id="IPR022281">
    <property type="entry name" value="ATP-dep_Prtase_HsIV_su"/>
</dbReference>
<dbReference type="InterPro" id="IPR029055">
    <property type="entry name" value="Ntn_hydrolases_N"/>
</dbReference>
<dbReference type="InterPro" id="IPR001353">
    <property type="entry name" value="Proteasome_sua/b"/>
</dbReference>
<dbReference type="InterPro" id="IPR023333">
    <property type="entry name" value="Proteasome_suB-type"/>
</dbReference>
<dbReference type="NCBIfam" id="TIGR03692">
    <property type="entry name" value="ATP_dep_HslV"/>
    <property type="match status" value="1"/>
</dbReference>
<dbReference type="NCBIfam" id="NF003964">
    <property type="entry name" value="PRK05456.1"/>
    <property type="match status" value="1"/>
</dbReference>
<dbReference type="PANTHER" id="PTHR32194:SF0">
    <property type="entry name" value="ATP-DEPENDENT PROTEASE SUBUNIT HSLV"/>
    <property type="match status" value="1"/>
</dbReference>
<dbReference type="PANTHER" id="PTHR32194">
    <property type="entry name" value="METALLOPROTEASE TLDD"/>
    <property type="match status" value="1"/>
</dbReference>
<dbReference type="Pfam" id="PF00227">
    <property type="entry name" value="Proteasome"/>
    <property type="match status" value="1"/>
</dbReference>
<dbReference type="PIRSF" id="PIRSF039093">
    <property type="entry name" value="HslV"/>
    <property type="match status" value="1"/>
</dbReference>
<dbReference type="SUPFAM" id="SSF56235">
    <property type="entry name" value="N-terminal nucleophile aminohydrolases (Ntn hydrolases)"/>
    <property type="match status" value="1"/>
</dbReference>
<dbReference type="PROSITE" id="PS51476">
    <property type="entry name" value="PROTEASOME_BETA_2"/>
    <property type="match status" value="1"/>
</dbReference>
<organism>
    <name type="scientific">Legionella pneumophila (strain Corby)</name>
    <dbReference type="NCBI Taxonomy" id="400673"/>
    <lineage>
        <taxon>Bacteria</taxon>
        <taxon>Pseudomonadati</taxon>
        <taxon>Pseudomonadota</taxon>
        <taxon>Gammaproteobacteria</taxon>
        <taxon>Legionellales</taxon>
        <taxon>Legionellaceae</taxon>
        <taxon>Legionella</taxon>
    </lineage>
</organism>